<name>LEXA_STAAW</name>
<accession>Q93SM0</accession>
<proteinExistence type="inferred from homology"/>
<comment type="function">
    <text evidence="1">Represses a number of genes involved in the response to DNA damage (SOS response), including recA and lexA. In the presence of single-stranded DNA, RecA interacts with LexA causing an autocatalytic cleavage which disrupts the DNA-binding part of LexA, leading to derepression of the SOS regulon and eventually DNA repair.</text>
</comment>
<comment type="catalytic activity">
    <reaction evidence="1">
        <text>Hydrolysis of Ala-|-Gly bond in repressor LexA.</text>
        <dbReference type="EC" id="3.4.21.88"/>
    </reaction>
</comment>
<comment type="subunit">
    <text evidence="1">Homodimer.</text>
</comment>
<comment type="similarity">
    <text evidence="1">Belongs to the peptidase S24 family.</text>
</comment>
<evidence type="ECO:0000255" key="1">
    <source>
        <dbReference type="HAMAP-Rule" id="MF_00015"/>
    </source>
</evidence>
<reference key="1">
    <citation type="submission" date="2001-04" db="EMBL/GenBank/DDBJ databases">
        <title>Insertional inactivation of recA, but not agr or sar, abolishes increased adhesion to fibronectin evoked by sub-inhibitory levels of ciprofloxacin in quinolone resistant Staphylococcus aureus.</title>
        <authorList>
            <person name="Bisognano C."/>
            <person name="Kelley W.L."/>
            <person name="Francois P."/>
            <person name="Schrenzel J."/>
            <person name="Lew D.P."/>
            <person name="Hooper D.C."/>
            <person name="Vaudaux P."/>
        </authorList>
    </citation>
    <scope>NUCLEOTIDE SEQUENCE [GENOMIC DNA]</scope>
    <source>
        <strain>8325</strain>
    </source>
</reference>
<reference key="2">
    <citation type="journal article" date="2002" name="Lancet">
        <title>Genome and virulence determinants of high virulence community-acquired MRSA.</title>
        <authorList>
            <person name="Baba T."/>
            <person name="Takeuchi F."/>
            <person name="Kuroda M."/>
            <person name="Yuzawa H."/>
            <person name="Aoki K."/>
            <person name="Oguchi A."/>
            <person name="Nagai Y."/>
            <person name="Iwama N."/>
            <person name="Asano K."/>
            <person name="Naimi T."/>
            <person name="Kuroda H."/>
            <person name="Cui L."/>
            <person name="Yamamoto K."/>
            <person name="Hiramatsu K."/>
        </authorList>
    </citation>
    <scope>NUCLEOTIDE SEQUENCE [LARGE SCALE GENOMIC DNA]</scope>
    <source>
        <strain>MW2</strain>
    </source>
</reference>
<organism>
    <name type="scientific">Staphylococcus aureus (strain MW2)</name>
    <dbReference type="NCBI Taxonomy" id="196620"/>
    <lineage>
        <taxon>Bacteria</taxon>
        <taxon>Bacillati</taxon>
        <taxon>Bacillota</taxon>
        <taxon>Bacilli</taxon>
        <taxon>Bacillales</taxon>
        <taxon>Staphylococcaceae</taxon>
        <taxon>Staphylococcus</taxon>
    </lineage>
</organism>
<gene>
    <name evidence="1" type="primary">lexA</name>
    <name type="ordered locus">MW1226</name>
</gene>
<dbReference type="EC" id="3.4.21.88" evidence="1"/>
<dbReference type="EMBL" id="AY033082">
    <property type="protein sequence ID" value="AAK52314.1"/>
    <property type="molecule type" value="Genomic_DNA"/>
</dbReference>
<dbReference type="EMBL" id="BA000033">
    <property type="protein sequence ID" value="BAB95091.1"/>
    <property type="molecule type" value="Genomic_DNA"/>
</dbReference>
<dbReference type="RefSeq" id="WP_001208760.1">
    <property type="nucleotide sequence ID" value="NC_003923.1"/>
</dbReference>
<dbReference type="SMR" id="Q93SM0"/>
<dbReference type="MEROPS" id="S24.001"/>
<dbReference type="KEGG" id="sam:MW1226"/>
<dbReference type="HOGENOM" id="CLU_066192_45_1_9"/>
<dbReference type="GO" id="GO:0003677">
    <property type="term" value="F:DNA binding"/>
    <property type="evidence" value="ECO:0007669"/>
    <property type="project" value="UniProtKB-UniRule"/>
</dbReference>
<dbReference type="GO" id="GO:0004252">
    <property type="term" value="F:serine-type endopeptidase activity"/>
    <property type="evidence" value="ECO:0007669"/>
    <property type="project" value="UniProtKB-UniRule"/>
</dbReference>
<dbReference type="GO" id="GO:0006281">
    <property type="term" value="P:DNA repair"/>
    <property type="evidence" value="ECO:0007669"/>
    <property type="project" value="UniProtKB-UniRule"/>
</dbReference>
<dbReference type="GO" id="GO:0006260">
    <property type="term" value="P:DNA replication"/>
    <property type="evidence" value="ECO:0007669"/>
    <property type="project" value="UniProtKB-UniRule"/>
</dbReference>
<dbReference type="GO" id="GO:0045892">
    <property type="term" value="P:negative regulation of DNA-templated transcription"/>
    <property type="evidence" value="ECO:0007669"/>
    <property type="project" value="UniProtKB-UniRule"/>
</dbReference>
<dbReference type="GO" id="GO:0006508">
    <property type="term" value="P:proteolysis"/>
    <property type="evidence" value="ECO:0007669"/>
    <property type="project" value="InterPro"/>
</dbReference>
<dbReference type="GO" id="GO:0009432">
    <property type="term" value="P:SOS response"/>
    <property type="evidence" value="ECO:0007669"/>
    <property type="project" value="UniProtKB-UniRule"/>
</dbReference>
<dbReference type="CDD" id="cd00090">
    <property type="entry name" value="HTH_ARSR"/>
    <property type="match status" value="1"/>
</dbReference>
<dbReference type="CDD" id="cd06529">
    <property type="entry name" value="S24_LexA-like"/>
    <property type="match status" value="1"/>
</dbReference>
<dbReference type="FunFam" id="1.10.10.10:FF:000009">
    <property type="entry name" value="LexA repressor"/>
    <property type="match status" value="1"/>
</dbReference>
<dbReference type="FunFam" id="2.10.109.10:FF:000001">
    <property type="entry name" value="LexA repressor"/>
    <property type="match status" value="1"/>
</dbReference>
<dbReference type="Gene3D" id="2.10.109.10">
    <property type="entry name" value="Umud Fragment, subunit A"/>
    <property type="match status" value="1"/>
</dbReference>
<dbReference type="Gene3D" id="1.10.10.10">
    <property type="entry name" value="Winged helix-like DNA-binding domain superfamily/Winged helix DNA-binding domain"/>
    <property type="match status" value="1"/>
</dbReference>
<dbReference type="HAMAP" id="MF_00015">
    <property type="entry name" value="LexA"/>
    <property type="match status" value="1"/>
</dbReference>
<dbReference type="InterPro" id="IPR011991">
    <property type="entry name" value="ArsR-like_HTH"/>
</dbReference>
<dbReference type="InterPro" id="IPR006200">
    <property type="entry name" value="LexA"/>
</dbReference>
<dbReference type="InterPro" id="IPR039418">
    <property type="entry name" value="LexA-like"/>
</dbReference>
<dbReference type="InterPro" id="IPR036286">
    <property type="entry name" value="LexA/Signal_pep-like_sf"/>
</dbReference>
<dbReference type="InterPro" id="IPR006199">
    <property type="entry name" value="LexA_DNA-bd_dom"/>
</dbReference>
<dbReference type="InterPro" id="IPR050077">
    <property type="entry name" value="LexA_repressor"/>
</dbReference>
<dbReference type="InterPro" id="IPR006197">
    <property type="entry name" value="Peptidase_S24_LexA"/>
</dbReference>
<dbReference type="InterPro" id="IPR015927">
    <property type="entry name" value="Peptidase_S24_S26A/B/C"/>
</dbReference>
<dbReference type="InterPro" id="IPR036388">
    <property type="entry name" value="WH-like_DNA-bd_sf"/>
</dbReference>
<dbReference type="InterPro" id="IPR036390">
    <property type="entry name" value="WH_DNA-bd_sf"/>
</dbReference>
<dbReference type="NCBIfam" id="TIGR00498">
    <property type="entry name" value="lexA"/>
    <property type="match status" value="1"/>
</dbReference>
<dbReference type="PANTHER" id="PTHR33516">
    <property type="entry name" value="LEXA REPRESSOR"/>
    <property type="match status" value="1"/>
</dbReference>
<dbReference type="PANTHER" id="PTHR33516:SF2">
    <property type="entry name" value="LEXA REPRESSOR-RELATED"/>
    <property type="match status" value="1"/>
</dbReference>
<dbReference type="Pfam" id="PF01726">
    <property type="entry name" value="LexA_DNA_bind"/>
    <property type="match status" value="1"/>
</dbReference>
<dbReference type="Pfam" id="PF00717">
    <property type="entry name" value="Peptidase_S24"/>
    <property type="match status" value="1"/>
</dbReference>
<dbReference type="PRINTS" id="PR00726">
    <property type="entry name" value="LEXASERPTASE"/>
</dbReference>
<dbReference type="SUPFAM" id="SSF51306">
    <property type="entry name" value="LexA/Signal peptidase"/>
    <property type="match status" value="1"/>
</dbReference>
<dbReference type="SUPFAM" id="SSF46785">
    <property type="entry name" value="Winged helix' DNA-binding domain"/>
    <property type="match status" value="1"/>
</dbReference>
<sequence length="207" mass="23301">MRELTKRQSEIYNYIKQVVQTKGYPPSVREIGEAVGLASSSTVHGHLSRLEEKGYIRRDPTKPRAIEIVSDQTNDNINMEETIHVPVIGKVTAGVPITAVENIEEYFPLPEHLTSTHNSDIFILNVVGDSMIEAGILDGDKVIVRSQTIAENGDIIVAMTEEDEATVKRFYKEKNRYRLQPENSTMEPIYLDNVAVIGKVIGLYREM</sequence>
<keyword id="KW-0068">Autocatalytic cleavage</keyword>
<keyword id="KW-0227">DNA damage</keyword>
<keyword id="KW-0234">DNA repair</keyword>
<keyword id="KW-0235">DNA replication</keyword>
<keyword id="KW-0238">DNA-binding</keyword>
<keyword id="KW-0378">Hydrolase</keyword>
<keyword id="KW-0678">Repressor</keyword>
<keyword id="KW-0742">SOS response</keyword>
<keyword id="KW-0804">Transcription</keyword>
<keyword id="KW-0805">Transcription regulation</keyword>
<protein>
    <recommendedName>
        <fullName evidence="1">LexA repressor</fullName>
        <ecNumber evidence="1">3.4.21.88</ecNumber>
    </recommendedName>
</protein>
<feature type="chain" id="PRO_0000170092" description="LexA repressor">
    <location>
        <begin position="1"/>
        <end position="207"/>
    </location>
</feature>
<feature type="DNA-binding region" description="H-T-H motif" evidence="1">
    <location>
        <begin position="28"/>
        <end position="48"/>
    </location>
</feature>
<feature type="active site" description="For autocatalytic cleavage activity" evidence="1">
    <location>
        <position position="130"/>
    </location>
</feature>
<feature type="active site" description="For autocatalytic cleavage activity" evidence="1">
    <location>
        <position position="168"/>
    </location>
</feature>
<feature type="site" description="Cleavage; by autolysis" evidence="1">
    <location>
        <begin position="93"/>
        <end position="94"/>
    </location>
</feature>